<gene>
    <name evidence="1" type="primary">mdtD</name>
    <name type="ordered locus">E2348C_2220</name>
</gene>
<name>MDTD_ECO27</name>
<reference key="1">
    <citation type="journal article" date="2009" name="J. Bacteriol.">
        <title>Complete genome sequence and comparative genome analysis of enteropathogenic Escherichia coli O127:H6 strain E2348/69.</title>
        <authorList>
            <person name="Iguchi A."/>
            <person name="Thomson N.R."/>
            <person name="Ogura Y."/>
            <person name="Saunders D."/>
            <person name="Ooka T."/>
            <person name="Henderson I.R."/>
            <person name="Harris D."/>
            <person name="Asadulghani M."/>
            <person name="Kurokawa K."/>
            <person name="Dean P."/>
            <person name="Kenny B."/>
            <person name="Quail M.A."/>
            <person name="Thurston S."/>
            <person name="Dougan G."/>
            <person name="Hayashi T."/>
            <person name="Parkhill J."/>
            <person name="Frankel G."/>
        </authorList>
    </citation>
    <scope>NUCLEOTIDE SEQUENCE [LARGE SCALE GENOMIC DNA]</scope>
    <source>
        <strain>E2348/69 / EPEC</strain>
    </source>
</reference>
<accession>B7UTB5</accession>
<protein>
    <recommendedName>
        <fullName evidence="1">Putative multidrug resistance protein MdtD</fullName>
    </recommendedName>
</protein>
<keyword id="KW-0997">Cell inner membrane</keyword>
<keyword id="KW-1003">Cell membrane</keyword>
<keyword id="KW-0472">Membrane</keyword>
<keyword id="KW-1185">Reference proteome</keyword>
<keyword id="KW-0812">Transmembrane</keyword>
<keyword id="KW-1133">Transmembrane helix</keyword>
<keyword id="KW-0813">Transport</keyword>
<evidence type="ECO:0000255" key="1">
    <source>
        <dbReference type="HAMAP-Rule" id="MF_01577"/>
    </source>
</evidence>
<dbReference type="EMBL" id="FM180568">
    <property type="protein sequence ID" value="CAS09768.1"/>
    <property type="molecule type" value="Genomic_DNA"/>
</dbReference>
<dbReference type="RefSeq" id="WP_000130882.1">
    <property type="nucleotide sequence ID" value="NC_011601.1"/>
</dbReference>
<dbReference type="SMR" id="B7UTB5"/>
<dbReference type="KEGG" id="ecg:E2348C_2220"/>
<dbReference type="HOGENOM" id="CLU_000960_28_0_6"/>
<dbReference type="Proteomes" id="UP000008205">
    <property type="component" value="Chromosome"/>
</dbReference>
<dbReference type="GO" id="GO:0005886">
    <property type="term" value="C:plasma membrane"/>
    <property type="evidence" value="ECO:0007669"/>
    <property type="project" value="UniProtKB-SubCell"/>
</dbReference>
<dbReference type="GO" id="GO:0022857">
    <property type="term" value="F:transmembrane transporter activity"/>
    <property type="evidence" value="ECO:0007669"/>
    <property type="project" value="UniProtKB-UniRule"/>
</dbReference>
<dbReference type="CDD" id="cd17503">
    <property type="entry name" value="MFS_LmrB_MDR_like"/>
    <property type="match status" value="1"/>
</dbReference>
<dbReference type="FunFam" id="1.20.1250.20:FF:000021">
    <property type="entry name" value="Putative multidrug resistance protein MdtD"/>
    <property type="match status" value="1"/>
</dbReference>
<dbReference type="FunFam" id="1.20.1720.10:FF:000001">
    <property type="entry name" value="Putative multidrug resistance protein MdtD"/>
    <property type="match status" value="1"/>
</dbReference>
<dbReference type="Gene3D" id="1.20.1250.20">
    <property type="entry name" value="MFS general substrate transporter like domains"/>
    <property type="match status" value="1"/>
</dbReference>
<dbReference type="Gene3D" id="1.20.1720.10">
    <property type="entry name" value="Multidrug resistance protein D"/>
    <property type="match status" value="1"/>
</dbReference>
<dbReference type="HAMAP" id="MF_01577">
    <property type="entry name" value="MFS_MdtD"/>
    <property type="match status" value="1"/>
</dbReference>
<dbReference type="InterPro" id="IPR004638">
    <property type="entry name" value="EmrB-like"/>
</dbReference>
<dbReference type="InterPro" id="IPR011701">
    <property type="entry name" value="MFS"/>
</dbReference>
<dbReference type="InterPro" id="IPR020846">
    <property type="entry name" value="MFS_dom"/>
</dbReference>
<dbReference type="InterPro" id="IPR036259">
    <property type="entry name" value="MFS_trans_sf"/>
</dbReference>
<dbReference type="InterPro" id="IPR023721">
    <property type="entry name" value="Multi-R_MdtD"/>
</dbReference>
<dbReference type="NCBIfam" id="TIGR00711">
    <property type="entry name" value="efflux_EmrB"/>
    <property type="match status" value="1"/>
</dbReference>
<dbReference type="NCBIfam" id="NF007799">
    <property type="entry name" value="PRK10504.1"/>
    <property type="match status" value="1"/>
</dbReference>
<dbReference type="PANTHER" id="PTHR42718:SF46">
    <property type="entry name" value="BLR6921 PROTEIN"/>
    <property type="match status" value="1"/>
</dbReference>
<dbReference type="PANTHER" id="PTHR42718">
    <property type="entry name" value="MAJOR FACILITATOR SUPERFAMILY MULTIDRUG TRANSPORTER MFSC"/>
    <property type="match status" value="1"/>
</dbReference>
<dbReference type="Pfam" id="PF07690">
    <property type="entry name" value="MFS_1"/>
    <property type="match status" value="1"/>
</dbReference>
<dbReference type="PRINTS" id="PR01036">
    <property type="entry name" value="TCRTETB"/>
</dbReference>
<dbReference type="SUPFAM" id="SSF103473">
    <property type="entry name" value="MFS general substrate transporter"/>
    <property type="match status" value="1"/>
</dbReference>
<dbReference type="PROSITE" id="PS50850">
    <property type="entry name" value="MFS"/>
    <property type="match status" value="1"/>
</dbReference>
<proteinExistence type="inferred from homology"/>
<feature type="chain" id="PRO_1000185634" description="Putative multidrug resistance protein MdtD">
    <location>
        <begin position="1"/>
        <end position="471"/>
    </location>
</feature>
<feature type="topological domain" description="Periplasmic" evidence="1">
    <location>
        <begin position="1"/>
        <end position="11"/>
    </location>
</feature>
<feature type="transmembrane region" description="Helical" evidence="1">
    <location>
        <begin position="12"/>
        <end position="32"/>
    </location>
</feature>
<feature type="topological domain" description="Cytoplasmic" evidence="1">
    <location>
        <begin position="33"/>
        <end position="48"/>
    </location>
</feature>
<feature type="transmembrane region" description="Helical" evidence="1">
    <location>
        <begin position="49"/>
        <end position="69"/>
    </location>
</feature>
<feature type="topological domain" description="Periplasmic" evidence="1">
    <location>
        <begin position="70"/>
        <end position="76"/>
    </location>
</feature>
<feature type="transmembrane region" description="Helical" evidence="1">
    <location>
        <begin position="77"/>
        <end position="97"/>
    </location>
</feature>
<feature type="topological domain" description="Cytoplasmic" evidence="1">
    <location>
        <begin position="98"/>
        <end position="101"/>
    </location>
</feature>
<feature type="transmembrane region" description="Helical" evidence="1">
    <location>
        <begin position="102"/>
        <end position="124"/>
    </location>
</feature>
<feature type="topological domain" description="Periplasmic" evidence="1">
    <location>
        <begin position="125"/>
        <end position="137"/>
    </location>
</feature>
<feature type="transmembrane region" description="Helical" evidence="1">
    <location>
        <begin position="138"/>
        <end position="158"/>
    </location>
</feature>
<feature type="topological domain" description="Cytoplasmic" evidence="1">
    <location>
        <begin position="159"/>
        <end position="164"/>
    </location>
</feature>
<feature type="transmembrane region" description="Helical" evidence="1">
    <location>
        <begin position="165"/>
        <end position="185"/>
    </location>
</feature>
<feature type="topological domain" description="Periplasmic" evidence="1">
    <location>
        <begin position="186"/>
        <end position="196"/>
    </location>
</feature>
<feature type="transmembrane region" description="Helical" evidence="1">
    <location>
        <begin position="197"/>
        <end position="217"/>
    </location>
</feature>
<feature type="topological domain" description="Cytoplasmic" evidence="1">
    <location>
        <begin position="218"/>
        <end position="224"/>
    </location>
</feature>
<feature type="transmembrane region" description="Helical" evidence="1">
    <location>
        <begin position="225"/>
        <end position="245"/>
    </location>
</feature>
<feature type="topological domain" description="Periplasmic" evidence="1">
    <location>
        <begin position="246"/>
        <end position="262"/>
    </location>
</feature>
<feature type="transmembrane region" description="Helical" evidence="1">
    <location>
        <begin position="263"/>
        <end position="283"/>
    </location>
</feature>
<feature type="topological domain" description="Cytoplasmic" evidence="1">
    <location>
        <begin position="284"/>
        <end position="285"/>
    </location>
</feature>
<feature type="transmembrane region" description="Helical" evidence="1">
    <location>
        <begin position="286"/>
        <end position="306"/>
    </location>
</feature>
<feature type="topological domain" description="Periplasmic" evidence="1">
    <location>
        <begin position="307"/>
        <end position="341"/>
    </location>
</feature>
<feature type="transmembrane region" description="Helical" evidence="1">
    <location>
        <begin position="342"/>
        <end position="362"/>
    </location>
</feature>
<feature type="topological domain" description="Cytoplasmic" evidence="1">
    <location>
        <begin position="363"/>
        <end position="395"/>
    </location>
</feature>
<feature type="transmembrane region" description="Helical" evidence="1">
    <location>
        <begin position="396"/>
        <end position="416"/>
    </location>
</feature>
<feature type="topological domain" description="Periplasmic" evidence="1">
    <location>
        <begin position="417"/>
        <end position="430"/>
    </location>
</feature>
<feature type="transmembrane region" description="Helical" evidence="1">
    <location>
        <begin position="431"/>
        <end position="451"/>
    </location>
</feature>
<feature type="topological domain" description="Cytoplasmic" evidence="1">
    <location>
        <begin position="452"/>
        <end position="471"/>
    </location>
</feature>
<organism>
    <name type="scientific">Escherichia coli O127:H6 (strain E2348/69 / EPEC)</name>
    <dbReference type="NCBI Taxonomy" id="574521"/>
    <lineage>
        <taxon>Bacteria</taxon>
        <taxon>Pseudomonadati</taxon>
        <taxon>Pseudomonadota</taxon>
        <taxon>Gammaproteobacteria</taxon>
        <taxon>Enterobacterales</taxon>
        <taxon>Enterobacteriaceae</taxon>
        <taxon>Escherichia</taxon>
    </lineage>
</organism>
<sequence length="471" mass="50976">MTDLPDSTRWQLWIVAFGFFMQSLDTTIVNTALPSMAQSLGESPLHMHMVIVSYVLTVAVMLPASGWLADKVGVRNIFFTAIVLFTLGSLFCALSGTLNELLLARALQGVGGAMMVPVGRLTVMKIVPREQYMAAMTFVTLPGQVGPLLGPALGGLLVEYASWHWIFLINIPVGIIGAIATLMLMPNYTMQTRRFDLSGFLLLAVGMAVLTLALDGSKGTGLSPLAITGLVAVGVVALVLYLLHARNNHRALFSLKLFRTRTFSLGLAGSFAGRIGSGMLPFMTPVFLQIGLGFSPFHAGLMMIPMVLGSMGMKRIVVQVVNRFGYRRVLVATTLGLSLVTLLFMTTALLGWYYVLPFVLFLQGMVNSTRFSSMNTLTLKDLPDNLASSGNSLLSMIMQLSMSIGVTIAGLLLGLFGSQHVSVDSGTTQTVFMYTWLSMAFIIALPAFIFARVPNDTHQNVAISRRKRSAQ</sequence>
<comment type="subcellular location">
    <subcellularLocation>
        <location evidence="1">Cell inner membrane</location>
        <topology evidence="1">Multi-pass membrane protein</topology>
    </subcellularLocation>
</comment>
<comment type="similarity">
    <text evidence="1">Belongs to the major facilitator superfamily. TCR/Tet family.</text>
</comment>